<dbReference type="EC" id="2.4.99.17" evidence="1"/>
<dbReference type="EMBL" id="BX572601">
    <property type="protein sequence ID" value="CAE28046.1"/>
    <property type="status" value="ALT_INIT"/>
    <property type="molecule type" value="Genomic_DNA"/>
</dbReference>
<dbReference type="RefSeq" id="WP_042441087.1">
    <property type="nucleotide sequence ID" value="NZ_CP116810.1"/>
</dbReference>
<dbReference type="SMR" id="Q6N6L0"/>
<dbReference type="STRING" id="258594.RPA2605"/>
<dbReference type="GeneID" id="66893674"/>
<dbReference type="eggNOG" id="COG0809">
    <property type="taxonomic scope" value="Bacteria"/>
</dbReference>
<dbReference type="HOGENOM" id="CLU_039110_1_1_5"/>
<dbReference type="PhylomeDB" id="Q6N6L0"/>
<dbReference type="UniPathway" id="UPA00392"/>
<dbReference type="GO" id="GO:0005737">
    <property type="term" value="C:cytoplasm"/>
    <property type="evidence" value="ECO:0007669"/>
    <property type="project" value="UniProtKB-SubCell"/>
</dbReference>
<dbReference type="GO" id="GO:0051075">
    <property type="term" value="F:S-adenosylmethionine:tRNA ribosyltransferase-isomerase activity"/>
    <property type="evidence" value="ECO:0007669"/>
    <property type="project" value="UniProtKB-EC"/>
</dbReference>
<dbReference type="GO" id="GO:0008616">
    <property type="term" value="P:queuosine biosynthetic process"/>
    <property type="evidence" value="ECO:0007669"/>
    <property type="project" value="UniProtKB-UniRule"/>
</dbReference>
<dbReference type="GO" id="GO:0002099">
    <property type="term" value="P:tRNA wobble guanine modification"/>
    <property type="evidence" value="ECO:0007669"/>
    <property type="project" value="TreeGrafter"/>
</dbReference>
<dbReference type="FunFam" id="3.40.1780.10:FF:000001">
    <property type="entry name" value="S-adenosylmethionine:tRNA ribosyltransferase-isomerase"/>
    <property type="match status" value="1"/>
</dbReference>
<dbReference type="Gene3D" id="2.40.10.240">
    <property type="entry name" value="QueA-like"/>
    <property type="match status" value="1"/>
</dbReference>
<dbReference type="Gene3D" id="3.40.1780.10">
    <property type="entry name" value="QueA-like"/>
    <property type="match status" value="1"/>
</dbReference>
<dbReference type="HAMAP" id="MF_00113">
    <property type="entry name" value="QueA"/>
    <property type="match status" value="1"/>
</dbReference>
<dbReference type="InterPro" id="IPR003699">
    <property type="entry name" value="QueA"/>
</dbReference>
<dbReference type="InterPro" id="IPR042118">
    <property type="entry name" value="QueA_dom1"/>
</dbReference>
<dbReference type="InterPro" id="IPR042119">
    <property type="entry name" value="QueA_dom2"/>
</dbReference>
<dbReference type="InterPro" id="IPR036100">
    <property type="entry name" value="QueA_sf"/>
</dbReference>
<dbReference type="NCBIfam" id="NF001140">
    <property type="entry name" value="PRK00147.1"/>
    <property type="match status" value="1"/>
</dbReference>
<dbReference type="NCBIfam" id="TIGR00113">
    <property type="entry name" value="queA"/>
    <property type="match status" value="1"/>
</dbReference>
<dbReference type="PANTHER" id="PTHR30307">
    <property type="entry name" value="S-ADENOSYLMETHIONINE:TRNA RIBOSYLTRANSFERASE-ISOMERASE"/>
    <property type="match status" value="1"/>
</dbReference>
<dbReference type="PANTHER" id="PTHR30307:SF0">
    <property type="entry name" value="S-ADENOSYLMETHIONINE:TRNA RIBOSYLTRANSFERASE-ISOMERASE"/>
    <property type="match status" value="1"/>
</dbReference>
<dbReference type="Pfam" id="PF02547">
    <property type="entry name" value="Queuosine_synth"/>
    <property type="match status" value="1"/>
</dbReference>
<dbReference type="SUPFAM" id="SSF111337">
    <property type="entry name" value="QueA-like"/>
    <property type="match status" value="1"/>
</dbReference>
<protein>
    <recommendedName>
        <fullName evidence="1">S-adenosylmethionine:tRNA ribosyltransferase-isomerase</fullName>
        <ecNumber evidence="1">2.4.99.17</ecNumber>
    </recommendedName>
    <alternativeName>
        <fullName evidence="1">Queuosine biosynthesis protein QueA</fullName>
    </alternativeName>
</protein>
<organism>
    <name type="scientific">Rhodopseudomonas palustris (strain ATCC BAA-98 / CGA009)</name>
    <dbReference type="NCBI Taxonomy" id="258594"/>
    <lineage>
        <taxon>Bacteria</taxon>
        <taxon>Pseudomonadati</taxon>
        <taxon>Pseudomonadota</taxon>
        <taxon>Alphaproteobacteria</taxon>
        <taxon>Hyphomicrobiales</taxon>
        <taxon>Nitrobacteraceae</taxon>
        <taxon>Rhodopseudomonas</taxon>
    </lineage>
</organism>
<gene>
    <name evidence="1" type="primary">queA</name>
    <name type="ordered locus">RPA2605</name>
</gene>
<proteinExistence type="inferred from homology"/>
<name>QUEA_RHOPA</name>
<feature type="chain" id="PRO_0000231365" description="S-adenosylmethionine:tRNA ribosyltransferase-isomerase">
    <location>
        <begin position="1"/>
        <end position="360"/>
    </location>
</feature>
<sequence length="360" mass="38660">MRTELFDFDLPAENIALRPVSPRDAARMLVVRPGAPLEDRIVRDLPALLAPGDQLVVNDTRVIAAQLTGRRIGRGLEPKIEATLIKRLDGARWQALVKPAKKLLPGDVVRFGHDGRVCLLGHLDATVEAKGDAGEVTLVFSFHGPVLDQAIAEVGATPLPPYIASKRAPDAQDIADYQTMFASNEGAVAAPTAGLHFTAELETALAACGVGLHRITLHVGAGTFLPVKAEDTSEHRMHAEWGTISSGTAEALNAARAAGGRIVAVGTTSLRLLESAARDDGRIAPFADETSIFITPGYRFRAVDVLMTNFHLPRSTLFMLVSAFCGLDTMQAAYAHAIRTGYRFYSYGDASLLFRNDITP</sequence>
<evidence type="ECO:0000255" key="1">
    <source>
        <dbReference type="HAMAP-Rule" id="MF_00113"/>
    </source>
</evidence>
<evidence type="ECO:0000305" key="2"/>
<comment type="function">
    <text evidence="1">Transfers and isomerizes the ribose moiety from AdoMet to the 7-aminomethyl group of 7-deazaguanine (preQ1-tRNA) to give epoxyqueuosine (oQ-tRNA).</text>
</comment>
<comment type="catalytic activity">
    <reaction evidence="1">
        <text>7-aminomethyl-7-carbaguanosine(34) in tRNA + S-adenosyl-L-methionine = epoxyqueuosine(34) in tRNA + adenine + L-methionine + 2 H(+)</text>
        <dbReference type="Rhea" id="RHEA:32155"/>
        <dbReference type="Rhea" id="RHEA-COMP:10342"/>
        <dbReference type="Rhea" id="RHEA-COMP:18582"/>
        <dbReference type="ChEBI" id="CHEBI:15378"/>
        <dbReference type="ChEBI" id="CHEBI:16708"/>
        <dbReference type="ChEBI" id="CHEBI:57844"/>
        <dbReference type="ChEBI" id="CHEBI:59789"/>
        <dbReference type="ChEBI" id="CHEBI:82833"/>
        <dbReference type="ChEBI" id="CHEBI:194443"/>
        <dbReference type="EC" id="2.4.99.17"/>
    </reaction>
</comment>
<comment type="pathway">
    <text evidence="1">tRNA modification; tRNA-queuosine biosynthesis.</text>
</comment>
<comment type="subunit">
    <text evidence="1">Monomer.</text>
</comment>
<comment type="subcellular location">
    <subcellularLocation>
        <location evidence="1">Cytoplasm</location>
    </subcellularLocation>
</comment>
<comment type="similarity">
    <text evidence="1">Belongs to the QueA family.</text>
</comment>
<comment type="sequence caution" evidence="2">
    <conflict type="erroneous initiation">
        <sequence resource="EMBL-CDS" id="CAE28046"/>
    </conflict>
</comment>
<keyword id="KW-0963">Cytoplasm</keyword>
<keyword id="KW-0671">Queuosine biosynthesis</keyword>
<keyword id="KW-0949">S-adenosyl-L-methionine</keyword>
<keyword id="KW-0808">Transferase</keyword>
<accession>Q6N6L0</accession>
<reference key="1">
    <citation type="journal article" date="2004" name="Nat. Biotechnol.">
        <title>Complete genome sequence of the metabolically versatile photosynthetic bacterium Rhodopseudomonas palustris.</title>
        <authorList>
            <person name="Larimer F.W."/>
            <person name="Chain P."/>
            <person name="Hauser L."/>
            <person name="Lamerdin J.E."/>
            <person name="Malfatti S."/>
            <person name="Do L."/>
            <person name="Land M.L."/>
            <person name="Pelletier D.A."/>
            <person name="Beatty J.T."/>
            <person name="Lang A.S."/>
            <person name="Tabita F.R."/>
            <person name="Gibson J.L."/>
            <person name="Hanson T.E."/>
            <person name="Bobst C."/>
            <person name="Torres y Torres J.L."/>
            <person name="Peres C."/>
            <person name="Harrison F.H."/>
            <person name="Gibson J."/>
            <person name="Harwood C.S."/>
        </authorList>
    </citation>
    <scope>NUCLEOTIDE SEQUENCE [LARGE SCALE GENOMIC DNA]</scope>
    <source>
        <strain>ATCC BAA-98 / CGA009</strain>
    </source>
</reference>